<protein>
    <recommendedName>
        <fullName evidence="1">L-lactate dehydrogenase</fullName>
        <shortName evidence="1">L-LDH</shortName>
        <ecNumber evidence="1">1.1.1.27</ecNumber>
    </recommendedName>
</protein>
<dbReference type="EC" id="1.1.1.27" evidence="1"/>
<dbReference type="EMBL" id="M19394">
    <property type="protein sequence ID" value="AAA22564.1"/>
    <property type="molecule type" value="Genomic_DNA"/>
</dbReference>
<dbReference type="PIR" id="B29704">
    <property type="entry name" value="B29704"/>
</dbReference>
<dbReference type="SMR" id="Q59244"/>
<dbReference type="UniPathway" id="UPA00554">
    <property type="reaction ID" value="UER00611"/>
</dbReference>
<dbReference type="GO" id="GO:0005737">
    <property type="term" value="C:cytoplasm"/>
    <property type="evidence" value="ECO:0007669"/>
    <property type="project" value="UniProtKB-SubCell"/>
</dbReference>
<dbReference type="GO" id="GO:0004459">
    <property type="term" value="F:L-lactate dehydrogenase activity"/>
    <property type="evidence" value="ECO:0007669"/>
    <property type="project" value="UniProtKB-UniRule"/>
</dbReference>
<dbReference type="GO" id="GO:0006096">
    <property type="term" value="P:glycolytic process"/>
    <property type="evidence" value="ECO:0007669"/>
    <property type="project" value="UniProtKB-UniRule"/>
</dbReference>
<dbReference type="GO" id="GO:0006089">
    <property type="term" value="P:lactate metabolic process"/>
    <property type="evidence" value="ECO:0007669"/>
    <property type="project" value="TreeGrafter"/>
</dbReference>
<dbReference type="CDD" id="cd05291">
    <property type="entry name" value="HicDH_like"/>
    <property type="match status" value="1"/>
</dbReference>
<dbReference type="FunFam" id="3.90.110.10:FF:000005">
    <property type="entry name" value="L-lactate dehydrogenase"/>
    <property type="match status" value="1"/>
</dbReference>
<dbReference type="FunFam" id="3.40.50.720:FF:000018">
    <property type="entry name" value="Malate dehydrogenase"/>
    <property type="match status" value="1"/>
</dbReference>
<dbReference type="Gene3D" id="3.90.110.10">
    <property type="entry name" value="Lactate dehydrogenase/glycoside hydrolase, family 4, C-terminal"/>
    <property type="match status" value="1"/>
</dbReference>
<dbReference type="Gene3D" id="3.40.50.720">
    <property type="entry name" value="NAD(P)-binding Rossmann-like Domain"/>
    <property type="match status" value="1"/>
</dbReference>
<dbReference type="HAMAP" id="MF_00488">
    <property type="entry name" value="Lactate_dehydrog"/>
    <property type="match status" value="1"/>
</dbReference>
<dbReference type="InterPro" id="IPR001557">
    <property type="entry name" value="L-lactate/malate_DH"/>
</dbReference>
<dbReference type="InterPro" id="IPR011304">
    <property type="entry name" value="L-lactate_DH"/>
</dbReference>
<dbReference type="InterPro" id="IPR018177">
    <property type="entry name" value="L-lactate_DH_AS"/>
</dbReference>
<dbReference type="InterPro" id="IPR022383">
    <property type="entry name" value="Lactate/malate_DH_C"/>
</dbReference>
<dbReference type="InterPro" id="IPR001236">
    <property type="entry name" value="Lactate/malate_DH_N"/>
</dbReference>
<dbReference type="InterPro" id="IPR015955">
    <property type="entry name" value="Lactate_DH/Glyco_Ohase_4_C"/>
</dbReference>
<dbReference type="InterPro" id="IPR036291">
    <property type="entry name" value="NAD(P)-bd_dom_sf"/>
</dbReference>
<dbReference type="NCBIfam" id="TIGR01771">
    <property type="entry name" value="L-LDH-NAD"/>
    <property type="match status" value="1"/>
</dbReference>
<dbReference type="NCBIfam" id="NF000824">
    <property type="entry name" value="PRK00066.1"/>
    <property type="match status" value="1"/>
</dbReference>
<dbReference type="NCBIfam" id="NF004863">
    <property type="entry name" value="PRK06223.1"/>
    <property type="match status" value="1"/>
</dbReference>
<dbReference type="PANTHER" id="PTHR43128">
    <property type="entry name" value="L-2-HYDROXYCARBOXYLATE DEHYDROGENASE (NAD(P)(+))"/>
    <property type="match status" value="1"/>
</dbReference>
<dbReference type="PANTHER" id="PTHR43128:SF16">
    <property type="entry name" value="L-LACTATE DEHYDROGENASE"/>
    <property type="match status" value="1"/>
</dbReference>
<dbReference type="Pfam" id="PF02866">
    <property type="entry name" value="Ldh_1_C"/>
    <property type="match status" value="1"/>
</dbReference>
<dbReference type="Pfam" id="PF00056">
    <property type="entry name" value="Ldh_1_N"/>
    <property type="match status" value="1"/>
</dbReference>
<dbReference type="PIRSF" id="PIRSF000102">
    <property type="entry name" value="Lac_mal_DH"/>
    <property type="match status" value="1"/>
</dbReference>
<dbReference type="PRINTS" id="PR00086">
    <property type="entry name" value="LLDHDRGNASE"/>
</dbReference>
<dbReference type="SUPFAM" id="SSF56327">
    <property type="entry name" value="LDH C-terminal domain-like"/>
    <property type="match status" value="1"/>
</dbReference>
<dbReference type="SUPFAM" id="SSF51735">
    <property type="entry name" value="NAD(P)-binding Rossmann-fold domains"/>
    <property type="match status" value="1"/>
</dbReference>
<dbReference type="PROSITE" id="PS00064">
    <property type="entry name" value="L_LDH"/>
    <property type="match status" value="1"/>
</dbReference>
<accession>Q59244</accession>
<proteinExistence type="inferred from homology"/>
<comment type="function">
    <text evidence="1">Catalyzes the conversion of lactate to pyruvate.</text>
</comment>
<comment type="catalytic activity">
    <reaction evidence="1">
        <text>(S)-lactate + NAD(+) = pyruvate + NADH + H(+)</text>
        <dbReference type="Rhea" id="RHEA:23444"/>
        <dbReference type="ChEBI" id="CHEBI:15361"/>
        <dbReference type="ChEBI" id="CHEBI:15378"/>
        <dbReference type="ChEBI" id="CHEBI:16651"/>
        <dbReference type="ChEBI" id="CHEBI:57540"/>
        <dbReference type="ChEBI" id="CHEBI:57945"/>
        <dbReference type="EC" id="1.1.1.27"/>
    </reaction>
</comment>
<comment type="activity regulation">
    <text evidence="1">Allosterically activated by fructose 1,6-bisphosphate (FBP).</text>
</comment>
<comment type="pathway">
    <text evidence="1">Fermentation; pyruvate fermentation to lactate; (S)-lactate from pyruvate: step 1/1.</text>
</comment>
<comment type="subunit">
    <text evidence="1">Homotetramer.</text>
</comment>
<comment type="subcellular location">
    <subcellularLocation>
        <location evidence="1">Cytoplasm</location>
    </subcellularLocation>
</comment>
<comment type="similarity">
    <text evidence="1 2">Belongs to the LDH/MDH superfamily. LDH family.</text>
</comment>
<feature type="chain" id="PRO_0000168317" description="L-lactate dehydrogenase">
    <location>
        <begin position="1"/>
        <end position="317"/>
    </location>
</feature>
<feature type="active site" description="Proton acceptor" evidence="1">
    <location>
        <position position="179"/>
    </location>
</feature>
<feature type="binding site" evidence="1">
    <location>
        <position position="17"/>
    </location>
    <ligand>
        <name>NAD(+)</name>
        <dbReference type="ChEBI" id="CHEBI:57540"/>
    </ligand>
</feature>
<feature type="binding site" evidence="1">
    <location>
        <position position="38"/>
    </location>
    <ligand>
        <name>NAD(+)</name>
        <dbReference type="ChEBI" id="CHEBI:57540"/>
    </ligand>
</feature>
<feature type="binding site" evidence="1">
    <location>
        <position position="43"/>
    </location>
    <ligand>
        <name>NAD(+)</name>
        <dbReference type="ChEBI" id="CHEBI:57540"/>
    </ligand>
</feature>
<feature type="binding site" evidence="1">
    <location>
        <position position="69"/>
    </location>
    <ligand>
        <name>NAD(+)</name>
        <dbReference type="ChEBI" id="CHEBI:57540"/>
    </ligand>
</feature>
<feature type="binding site" evidence="1">
    <location>
        <begin position="83"/>
        <end position="84"/>
    </location>
    <ligand>
        <name>NAD(+)</name>
        <dbReference type="ChEBI" id="CHEBI:57540"/>
    </ligand>
</feature>
<feature type="binding site" evidence="1">
    <location>
        <position position="86"/>
    </location>
    <ligand>
        <name>substrate</name>
    </ligand>
</feature>
<feature type="binding site" evidence="1">
    <location>
        <position position="92"/>
    </location>
    <ligand>
        <name>substrate</name>
    </ligand>
</feature>
<feature type="binding site" evidence="1">
    <location>
        <position position="105"/>
    </location>
    <ligand>
        <name>NAD(+)</name>
        <dbReference type="ChEBI" id="CHEBI:57540"/>
    </ligand>
</feature>
<feature type="binding site" evidence="1">
    <location>
        <begin position="122"/>
        <end position="124"/>
    </location>
    <ligand>
        <name>NAD(+)</name>
        <dbReference type="ChEBI" id="CHEBI:57540"/>
    </ligand>
</feature>
<feature type="binding site" evidence="1">
    <location>
        <begin position="124"/>
        <end position="127"/>
    </location>
    <ligand>
        <name>substrate</name>
    </ligand>
</feature>
<feature type="binding site" evidence="1">
    <location>
        <position position="147"/>
    </location>
    <ligand>
        <name>NAD(+)</name>
        <dbReference type="ChEBI" id="CHEBI:57540"/>
    </ligand>
</feature>
<feature type="binding site" evidence="1">
    <location>
        <begin position="152"/>
        <end position="155"/>
    </location>
    <ligand>
        <name>substrate</name>
    </ligand>
</feature>
<feature type="binding site" evidence="1">
    <location>
        <position position="157"/>
    </location>
    <ligand>
        <name>beta-D-fructose 1,6-bisphosphate</name>
        <dbReference type="ChEBI" id="CHEBI:32966"/>
        <note>allosteric activator</note>
    </ligand>
</feature>
<feature type="binding site" evidence="1">
    <location>
        <position position="172"/>
    </location>
    <ligand>
        <name>beta-D-fructose 1,6-bisphosphate</name>
        <dbReference type="ChEBI" id="CHEBI:32966"/>
        <note>allosteric activator</note>
    </ligand>
</feature>
<feature type="binding site" evidence="1">
    <location>
        <position position="233"/>
    </location>
    <ligand>
        <name>substrate</name>
    </ligand>
</feature>
<feature type="modified residue" description="Phosphotyrosine" evidence="1">
    <location>
        <position position="224"/>
    </location>
</feature>
<organism>
    <name type="scientific">Bacillus caldolyticus</name>
    <dbReference type="NCBI Taxonomy" id="1394"/>
    <lineage>
        <taxon>Bacteria</taxon>
        <taxon>Bacillati</taxon>
        <taxon>Bacillota</taxon>
        <taxon>Bacilli</taxon>
        <taxon>Bacillales</taxon>
        <taxon>Anoxybacillaceae</taxon>
        <taxon>Geobacillus</taxon>
        <taxon>Geobacillus thermoleovorans group</taxon>
    </lineage>
</organism>
<sequence>MKNNGGTRVVVIGTGFVGASYAFALMNQGIADEIVLIDANESKAIGDAMDFNHGKVFAPKPADIWHGDYDDCRDADLVVICAGANQKPGETRLDLVDKNIAIFRSIVESVMASGFQGLFLVATNPVDILTYATWKFSGLPHERVIGSGTILDTARFRFLLGEYFSVAPQNVHAYIIGEHGDTELPVWSQADIGGVPIRKLVESKGEEAQKELERIFVNVRDAAYQIIEKKGATYYGIAMGLARVTRAILHNENAILTVSAYLDGPYGERDVYIGVPAVINRNGIREVIEIELNDDEKNRFHHSAATLKSVLARFFTR</sequence>
<keyword id="KW-0021">Allosteric enzyme</keyword>
<keyword id="KW-0963">Cytoplasm</keyword>
<keyword id="KW-0520">NAD</keyword>
<keyword id="KW-0560">Oxidoreductase</keyword>
<keyword id="KW-0597">Phosphoprotein</keyword>
<name>LDH_BACCL</name>
<reference key="1">
    <citation type="journal article" date="1987" name="Biol. Chem. Hoppe-Seyler">
        <title>Structure and function of L-lactate dehydrogenases from thermophilic and mesophilic bacteria, VI. Nucleotide sequences of lactate dehydrogenase genes from the thermophilic bacteria Bacillus stearothermophilus, B. caldolyticus and B. caldotenax.</title>
        <authorList>
            <person name="Zuelli F."/>
            <person name="Weber H."/>
            <person name="Zuber H."/>
        </authorList>
    </citation>
    <scope>NUCLEOTIDE SEQUENCE [GENOMIC DNA]</scope>
</reference>
<evidence type="ECO:0000255" key="1">
    <source>
        <dbReference type="HAMAP-Rule" id="MF_00488"/>
    </source>
</evidence>
<evidence type="ECO:0000305" key="2"/>
<gene>
    <name evidence="1" type="primary">ldh</name>
</gene>